<protein>
    <recommendedName>
        <fullName evidence="1">2,3-bisphosphoglycerate-dependent phosphoglycerate mutase</fullName>
        <shortName evidence="1">BPG-dependent PGAM</shortName>
        <shortName evidence="1">PGAM</shortName>
        <shortName evidence="1">Phosphoglyceromutase</shortName>
        <shortName evidence="1">dPGM</shortName>
        <ecNumber evidence="1">5.4.2.11</ecNumber>
    </recommendedName>
</protein>
<comment type="function">
    <text evidence="1">Catalyzes the interconversion of 2-phosphoglycerate and 3-phosphoglycerate.</text>
</comment>
<comment type="catalytic activity">
    <reaction evidence="1">
        <text>(2R)-2-phosphoglycerate = (2R)-3-phosphoglycerate</text>
        <dbReference type="Rhea" id="RHEA:15901"/>
        <dbReference type="ChEBI" id="CHEBI:58272"/>
        <dbReference type="ChEBI" id="CHEBI:58289"/>
        <dbReference type="EC" id="5.4.2.11"/>
    </reaction>
</comment>
<comment type="pathway">
    <text evidence="1">Carbohydrate degradation; glycolysis; pyruvate from D-glyceraldehyde 3-phosphate: step 3/5.</text>
</comment>
<comment type="subunit">
    <text evidence="1">Homodimer.</text>
</comment>
<comment type="similarity">
    <text evidence="1">Belongs to the phosphoglycerate mutase family. BPG-dependent PGAM subfamily.</text>
</comment>
<feature type="chain" id="PRO_1000149511" description="2,3-bisphosphoglycerate-dependent phosphoglycerate mutase">
    <location>
        <begin position="1"/>
        <end position="250"/>
    </location>
</feature>
<feature type="active site" description="Tele-phosphohistidine intermediate" evidence="1">
    <location>
        <position position="11"/>
    </location>
</feature>
<feature type="active site" description="Proton donor/acceptor" evidence="1">
    <location>
        <position position="89"/>
    </location>
</feature>
<feature type="binding site" evidence="1">
    <location>
        <begin position="10"/>
        <end position="17"/>
    </location>
    <ligand>
        <name>substrate</name>
    </ligand>
</feature>
<feature type="binding site" evidence="1">
    <location>
        <begin position="23"/>
        <end position="24"/>
    </location>
    <ligand>
        <name>substrate</name>
    </ligand>
</feature>
<feature type="binding site" evidence="1">
    <location>
        <position position="62"/>
    </location>
    <ligand>
        <name>substrate</name>
    </ligand>
</feature>
<feature type="binding site" evidence="1">
    <location>
        <begin position="89"/>
        <end position="92"/>
    </location>
    <ligand>
        <name>substrate</name>
    </ligand>
</feature>
<feature type="binding site" evidence="1">
    <location>
        <position position="100"/>
    </location>
    <ligand>
        <name>substrate</name>
    </ligand>
</feature>
<feature type="binding site" evidence="1">
    <location>
        <begin position="116"/>
        <end position="117"/>
    </location>
    <ligand>
        <name>substrate</name>
    </ligand>
</feature>
<feature type="binding site" evidence="1">
    <location>
        <begin position="185"/>
        <end position="186"/>
    </location>
    <ligand>
        <name>substrate</name>
    </ligand>
</feature>
<feature type="site" description="Transition state stabilizer" evidence="1">
    <location>
        <position position="184"/>
    </location>
</feature>
<dbReference type="EC" id="5.4.2.11" evidence="1"/>
<dbReference type="EMBL" id="FM180568">
    <property type="protein sequence ID" value="CAS08180.1"/>
    <property type="molecule type" value="Genomic_DNA"/>
</dbReference>
<dbReference type="RefSeq" id="WP_001295305.1">
    <property type="nucleotide sequence ID" value="NC_011601.1"/>
</dbReference>
<dbReference type="SMR" id="B7ULM8"/>
<dbReference type="GeneID" id="93776726"/>
<dbReference type="KEGG" id="ecg:E2348C_0632"/>
<dbReference type="HOGENOM" id="CLU_033323_1_1_6"/>
<dbReference type="UniPathway" id="UPA00109">
    <property type="reaction ID" value="UER00186"/>
</dbReference>
<dbReference type="Proteomes" id="UP000008205">
    <property type="component" value="Chromosome"/>
</dbReference>
<dbReference type="GO" id="GO:0004619">
    <property type="term" value="F:phosphoglycerate mutase activity"/>
    <property type="evidence" value="ECO:0007669"/>
    <property type="project" value="UniProtKB-EC"/>
</dbReference>
<dbReference type="GO" id="GO:0006094">
    <property type="term" value="P:gluconeogenesis"/>
    <property type="evidence" value="ECO:0007669"/>
    <property type="project" value="UniProtKB-UniRule"/>
</dbReference>
<dbReference type="GO" id="GO:0006096">
    <property type="term" value="P:glycolytic process"/>
    <property type="evidence" value="ECO:0007669"/>
    <property type="project" value="UniProtKB-UniRule"/>
</dbReference>
<dbReference type="CDD" id="cd07067">
    <property type="entry name" value="HP_PGM_like"/>
    <property type="match status" value="1"/>
</dbReference>
<dbReference type="FunFam" id="3.40.50.1240:FF:000003">
    <property type="entry name" value="2,3-bisphosphoglycerate-dependent phosphoglycerate mutase"/>
    <property type="match status" value="1"/>
</dbReference>
<dbReference type="Gene3D" id="3.40.50.1240">
    <property type="entry name" value="Phosphoglycerate mutase-like"/>
    <property type="match status" value="1"/>
</dbReference>
<dbReference type="HAMAP" id="MF_01039">
    <property type="entry name" value="PGAM_GpmA"/>
    <property type="match status" value="1"/>
</dbReference>
<dbReference type="InterPro" id="IPR013078">
    <property type="entry name" value="His_Pase_superF_clade-1"/>
</dbReference>
<dbReference type="InterPro" id="IPR029033">
    <property type="entry name" value="His_PPase_superfam"/>
</dbReference>
<dbReference type="InterPro" id="IPR001345">
    <property type="entry name" value="PG/BPGM_mutase_AS"/>
</dbReference>
<dbReference type="InterPro" id="IPR005952">
    <property type="entry name" value="Phosphogly_mut1"/>
</dbReference>
<dbReference type="NCBIfam" id="TIGR01258">
    <property type="entry name" value="pgm_1"/>
    <property type="match status" value="1"/>
</dbReference>
<dbReference type="NCBIfam" id="NF010713">
    <property type="entry name" value="PRK14115.1"/>
    <property type="match status" value="1"/>
</dbReference>
<dbReference type="PANTHER" id="PTHR11931">
    <property type="entry name" value="PHOSPHOGLYCERATE MUTASE"/>
    <property type="match status" value="1"/>
</dbReference>
<dbReference type="Pfam" id="PF00300">
    <property type="entry name" value="His_Phos_1"/>
    <property type="match status" value="1"/>
</dbReference>
<dbReference type="PIRSF" id="PIRSF000709">
    <property type="entry name" value="6PFK_2-Ptase"/>
    <property type="match status" value="1"/>
</dbReference>
<dbReference type="SMART" id="SM00855">
    <property type="entry name" value="PGAM"/>
    <property type="match status" value="1"/>
</dbReference>
<dbReference type="SUPFAM" id="SSF53254">
    <property type="entry name" value="Phosphoglycerate mutase-like"/>
    <property type="match status" value="1"/>
</dbReference>
<dbReference type="PROSITE" id="PS00175">
    <property type="entry name" value="PG_MUTASE"/>
    <property type="match status" value="1"/>
</dbReference>
<gene>
    <name evidence="1" type="primary">gpmA</name>
    <name type="ordered locus">E2348C_0632</name>
</gene>
<proteinExistence type="inferred from homology"/>
<reference key="1">
    <citation type="journal article" date="2009" name="J. Bacteriol.">
        <title>Complete genome sequence and comparative genome analysis of enteropathogenic Escherichia coli O127:H6 strain E2348/69.</title>
        <authorList>
            <person name="Iguchi A."/>
            <person name="Thomson N.R."/>
            <person name="Ogura Y."/>
            <person name="Saunders D."/>
            <person name="Ooka T."/>
            <person name="Henderson I.R."/>
            <person name="Harris D."/>
            <person name="Asadulghani M."/>
            <person name="Kurokawa K."/>
            <person name="Dean P."/>
            <person name="Kenny B."/>
            <person name="Quail M.A."/>
            <person name="Thurston S."/>
            <person name="Dougan G."/>
            <person name="Hayashi T."/>
            <person name="Parkhill J."/>
            <person name="Frankel G."/>
        </authorList>
    </citation>
    <scope>NUCLEOTIDE SEQUENCE [LARGE SCALE GENOMIC DNA]</scope>
    <source>
        <strain>E2348/69 / EPEC</strain>
    </source>
</reference>
<evidence type="ECO:0000255" key="1">
    <source>
        <dbReference type="HAMAP-Rule" id="MF_01039"/>
    </source>
</evidence>
<sequence>MAVTKLVLVRHGESQWNKENRFTGWYDVDLSEKGVSEAKAAGKLLKEEGYSFDFAYTSVLKRAIHTLWNVLDELDQAWLPVEKSWKLNERHYGALQGLNKAETAEKYGDEQVKQWRRGFAVTPPELTKDDERYPGHDPRYAKLSEKELPLTESLALTIDRVIPYWNETILPRMKSGERVIIAAHGNSLRALVKYLDNMSEEEILELNIPTGVPLVYEFDENFKPLKRYYLGNADEIAAKAAAVANQGKAK</sequence>
<organism>
    <name type="scientific">Escherichia coli O127:H6 (strain E2348/69 / EPEC)</name>
    <dbReference type="NCBI Taxonomy" id="574521"/>
    <lineage>
        <taxon>Bacteria</taxon>
        <taxon>Pseudomonadati</taxon>
        <taxon>Pseudomonadota</taxon>
        <taxon>Gammaproteobacteria</taxon>
        <taxon>Enterobacterales</taxon>
        <taxon>Enterobacteriaceae</taxon>
        <taxon>Escherichia</taxon>
    </lineage>
</organism>
<accession>B7ULM8</accession>
<keyword id="KW-0312">Gluconeogenesis</keyword>
<keyword id="KW-0324">Glycolysis</keyword>
<keyword id="KW-0413">Isomerase</keyword>
<keyword id="KW-1185">Reference proteome</keyword>
<name>GPMA_ECO27</name>